<accession>P19918</accession>
<protein>
    <recommendedName>
        <fullName>Carbon monoxide dehydrogenase small chain</fullName>
        <shortName>CO dehydrogenase subunit S</shortName>
        <shortName>CO-DH S</shortName>
        <ecNumber evidence="2">1.2.5.3</ecNumber>
    </recommendedName>
</protein>
<reference key="1">
    <citation type="journal article" date="1989" name="Arch. Microbiol.">
        <title>Homology and distribution of CO dehydrogenase structural genes in carboxydotrophic bacteria.</title>
        <authorList>
            <person name="Kraut M."/>
            <person name="Hugendieck I."/>
            <person name="Herwig S."/>
            <person name="Meyer O."/>
        </authorList>
    </citation>
    <scope>PROTEIN SEQUENCE</scope>
</reference>
<feature type="chain" id="PRO_0000079818" description="Carbon monoxide dehydrogenase small chain">
    <location>
        <begin position="1"/>
        <end position="4" status="greater than"/>
    </location>
</feature>
<feature type="non-terminal residue">
    <location>
        <position position="4"/>
    </location>
</feature>
<gene>
    <name type="primary">cutS</name>
</gene>
<proteinExistence type="evidence at protein level"/>
<evidence type="ECO:0000250" key="1"/>
<evidence type="ECO:0000250" key="2">
    <source>
        <dbReference type="UniProtKB" id="P19921"/>
    </source>
</evidence>
<name>DCMS_PSECH</name>
<dbReference type="EC" id="1.2.5.3" evidence="2"/>
<dbReference type="PIR" id="PL0146">
    <property type="entry name" value="PL0146"/>
</dbReference>
<dbReference type="GO" id="GO:0051537">
    <property type="term" value="F:2 iron, 2 sulfur cluster binding"/>
    <property type="evidence" value="ECO:0007669"/>
    <property type="project" value="UniProtKB-KW"/>
</dbReference>
<dbReference type="GO" id="GO:0008805">
    <property type="term" value="F:carbon-monoxide oxygenase activity"/>
    <property type="evidence" value="ECO:0007669"/>
    <property type="project" value="UniProtKB-EC"/>
</dbReference>
<dbReference type="GO" id="GO:0046872">
    <property type="term" value="F:metal ion binding"/>
    <property type="evidence" value="ECO:0007669"/>
    <property type="project" value="UniProtKB-KW"/>
</dbReference>
<sequence>MAKA</sequence>
<keyword id="KW-0001">2Fe-2S</keyword>
<keyword id="KW-0903">Direct protein sequencing</keyword>
<keyword id="KW-0408">Iron</keyword>
<keyword id="KW-0411">Iron-sulfur</keyword>
<keyword id="KW-0479">Metal-binding</keyword>
<keyword id="KW-0560">Oxidoreductase</keyword>
<organism>
    <name type="scientific">Pseudomonas carboxydohydrogena</name>
    <name type="common">Seliberia carboxydohydrogena</name>
    <dbReference type="NCBI Taxonomy" id="290"/>
    <lineage>
        <taxon>Bacteria</taxon>
        <taxon>Pseudomonadati</taxon>
        <taxon>Pseudomonadota</taxon>
        <taxon>Alphaproteobacteria</taxon>
        <taxon>Hyphomicrobiales</taxon>
        <taxon>Nitrobacteraceae</taxon>
        <taxon>Afipia</taxon>
    </lineage>
</organism>
<comment type="function">
    <text evidence="2">Catalyzes the oxidation of carbon monoxide to carbon dioxide.</text>
</comment>
<comment type="catalytic activity">
    <reaction evidence="2">
        <text>CO + a quinone + H2O = a quinol + CO2</text>
        <dbReference type="Rhea" id="RHEA:48880"/>
        <dbReference type="ChEBI" id="CHEBI:15377"/>
        <dbReference type="ChEBI" id="CHEBI:16526"/>
        <dbReference type="ChEBI" id="CHEBI:17245"/>
        <dbReference type="ChEBI" id="CHEBI:24646"/>
        <dbReference type="ChEBI" id="CHEBI:132124"/>
        <dbReference type="EC" id="1.2.5.3"/>
    </reaction>
</comment>
<comment type="cofactor">
    <cofactor evidence="1">
        <name>[2Fe-2S] cluster</name>
        <dbReference type="ChEBI" id="CHEBI:190135"/>
    </cofactor>
    <text evidence="1">Binds 2 [2Fe-2S] clusters.</text>
</comment>
<comment type="subunit">
    <text>Heterotrimer consisting of a large, a medium and a small subunit.</text>
</comment>